<feature type="chain" id="PRO_1000203658" description="Queuine tRNA-ribosyltransferase">
    <location>
        <begin position="1"/>
        <end position="381"/>
    </location>
</feature>
<feature type="region of interest" description="RNA binding" evidence="1">
    <location>
        <begin position="245"/>
        <end position="251"/>
    </location>
</feature>
<feature type="region of interest" description="RNA binding; important for wobble base 34 recognition" evidence="1">
    <location>
        <begin position="269"/>
        <end position="273"/>
    </location>
</feature>
<feature type="active site" description="Proton acceptor" evidence="1">
    <location>
        <position position="89"/>
    </location>
</feature>
<feature type="active site" description="Nucleophile" evidence="1">
    <location>
        <position position="264"/>
    </location>
</feature>
<feature type="binding site" evidence="1">
    <location>
        <begin position="89"/>
        <end position="93"/>
    </location>
    <ligand>
        <name>substrate</name>
    </ligand>
</feature>
<feature type="binding site" evidence="1">
    <location>
        <position position="143"/>
    </location>
    <ligand>
        <name>substrate</name>
    </ligand>
</feature>
<feature type="binding site" evidence="1">
    <location>
        <position position="187"/>
    </location>
    <ligand>
        <name>substrate</name>
    </ligand>
</feature>
<feature type="binding site" evidence="1">
    <location>
        <position position="214"/>
    </location>
    <ligand>
        <name>substrate</name>
    </ligand>
</feature>
<feature type="binding site" evidence="1">
    <location>
        <position position="302"/>
    </location>
    <ligand>
        <name>Zn(2+)</name>
        <dbReference type="ChEBI" id="CHEBI:29105"/>
    </ligand>
</feature>
<feature type="binding site" evidence="1">
    <location>
        <position position="304"/>
    </location>
    <ligand>
        <name>Zn(2+)</name>
        <dbReference type="ChEBI" id="CHEBI:29105"/>
    </ligand>
</feature>
<feature type="binding site" evidence="1">
    <location>
        <position position="307"/>
    </location>
    <ligand>
        <name>Zn(2+)</name>
        <dbReference type="ChEBI" id="CHEBI:29105"/>
    </ligand>
</feature>
<feature type="binding site" evidence="1">
    <location>
        <position position="333"/>
    </location>
    <ligand>
        <name>Zn(2+)</name>
        <dbReference type="ChEBI" id="CHEBI:29105"/>
    </ligand>
</feature>
<organism>
    <name type="scientific">Pectobacterium carotovorum subsp. carotovorum (strain PC1)</name>
    <dbReference type="NCBI Taxonomy" id="561230"/>
    <lineage>
        <taxon>Bacteria</taxon>
        <taxon>Pseudomonadati</taxon>
        <taxon>Pseudomonadota</taxon>
        <taxon>Gammaproteobacteria</taxon>
        <taxon>Enterobacterales</taxon>
        <taxon>Pectobacteriaceae</taxon>
        <taxon>Pectobacterium</taxon>
    </lineage>
</organism>
<accession>C6DB26</accession>
<dbReference type="EC" id="2.4.2.29" evidence="1"/>
<dbReference type="EMBL" id="CP001657">
    <property type="protein sequence ID" value="ACT12068.1"/>
    <property type="molecule type" value="Genomic_DNA"/>
</dbReference>
<dbReference type="RefSeq" id="WP_012773702.1">
    <property type="nucleotide sequence ID" value="NC_012917.1"/>
</dbReference>
<dbReference type="SMR" id="C6DB26"/>
<dbReference type="STRING" id="561230.PC1_1019"/>
<dbReference type="KEGG" id="pct:PC1_1019"/>
<dbReference type="eggNOG" id="COG0343">
    <property type="taxonomic scope" value="Bacteria"/>
</dbReference>
<dbReference type="HOGENOM" id="CLU_022060_0_1_6"/>
<dbReference type="OrthoDB" id="9805417at2"/>
<dbReference type="UniPathway" id="UPA00392"/>
<dbReference type="Proteomes" id="UP000002736">
    <property type="component" value="Chromosome"/>
</dbReference>
<dbReference type="GO" id="GO:0005829">
    <property type="term" value="C:cytosol"/>
    <property type="evidence" value="ECO:0007669"/>
    <property type="project" value="TreeGrafter"/>
</dbReference>
<dbReference type="GO" id="GO:0046872">
    <property type="term" value="F:metal ion binding"/>
    <property type="evidence" value="ECO:0007669"/>
    <property type="project" value="UniProtKB-KW"/>
</dbReference>
<dbReference type="GO" id="GO:0008479">
    <property type="term" value="F:tRNA-guanosine(34) queuine transglycosylase activity"/>
    <property type="evidence" value="ECO:0007669"/>
    <property type="project" value="UniProtKB-UniRule"/>
</dbReference>
<dbReference type="GO" id="GO:0008616">
    <property type="term" value="P:queuosine biosynthetic process"/>
    <property type="evidence" value="ECO:0007669"/>
    <property type="project" value="UniProtKB-UniRule"/>
</dbReference>
<dbReference type="GO" id="GO:0002099">
    <property type="term" value="P:tRNA wobble guanine modification"/>
    <property type="evidence" value="ECO:0007669"/>
    <property type="project" value="TreeGrafter"/>
</dbReference>
<dbReference type="GO" id="GO:0101030">
    <property type="term" value="P:tRNA-guanine transglycosylation"/>
    <property type="evidence" value="ECO:0007669"/>
    <property type="project" value="InterPro"/>
</dbReference>
<dbReference type="FunFam" id="3.20.20.105:FF:000001">
    <property type="entry name" value="Queuine tRNA-ribosyltransferase"/>
    <property type="match status" value="1"/>
</dbReference>
<dbReference type="Gene3D" id="3.20.20.105">
    <property type="entry name" value="Queuine tRNA-ribosyltransferase-like"/>
    <property type="match status" value="1"/>
</dbReference>
<dbReference type="HAMAP" id="MF_00168">
    <property type="entry name" value="Q_tRNA_Tgt"/>
    <property type="match status" value="1"/>
</dbReference>
<dbReference type="InterPro" id="IPR050076">
    <property type="entry name" value="ArchSynthase1/Queuine_TRR"/>
</dbReference>
<dbReference type="InterPro" id="IPR004803">
    <property type="entry name" value="TGT"/>
</dbReference>
<dbReference type="InterPro" id="IPR036511">
    <property type="entry name" value="TGT-like_sf"/>
</dbReference>
<dbReference type="InterPro" id="IPR002616">
    <property type="entry name" value="tRNA_ribo_trans-like"/>
</dbReference>
<dbReference type="NCBIfam" id="TIGR00430">
    <property type="entry name" value="Q_tRNA_tgt"/>
    <property type="match status" value="1"/>
</dbReference>
<dbReference type="NCBIfam" id="TIGR00449">
    <property type="entry name" value="tgt_general"/>
    <property type="match status" value="1"/>
</dbReference>
<dbReference type="PANTHER" id="PTHR46499">
    <property type="entry name" value="QUEUINE TRNA-RIBOSYLTRANSFERASE"/>
    <property type="match status" value="1"/>
</dbReference>
<dbReference type="PANTHER" id="PTHR46499:SF1">
    <property type="entry name" value="QUEUINE TRNA-RIBOSYLTRANSFERASE"/>
    <property type="match status" value="1"/>
</dbReference>
<dbReference type="Pfam" id="PF01702">
    <property type="entry name" value="TGT"/>
    <property type="match status" value="1"/>
</dbReference>
<dbReference type="SUPFAM" id="SSF51713">
    <property type="entry name" value="tRNA-guanine transglycosylase"/>
    <property type="match status" value="1"/>
</dbReference>
<reference key="1">
    <citation type="submission" date="2009-07" db="EMBL/GenBank/DDBJ databases">
        <title>Complete sequence of Pectobacterium carotovorum subsp. carotovorum PC1.</title>
        <authorList>
            <consortium name="US DOE Joint Genome Institute"/>
            <person name="Lucas S."/>
            <person name="Copeland A."/>
            <person name="Lapidus A."/>
            <person name="Glavina del Rio T."/>
            <person name="Tice H."/>
            <person name="Bruce D."/>
            <person name="Goodwin L."/>
            <person name="Pitluck S."/>
            <person name="Munk A.C."/>
            <person name="Brettin T."/>
            <person name="Detter J.C."/>
            <person name="Han C."/>
            <person name="Tapia R."/>
            <person name="Larimer F."/>
            <person name="Land M."/>
            <person name="Hauser L."/>
            <person name="Kyrpides N."/>
            <person name="Mikhailova N."/>
            <person name="Balakrishnan V."/>
            <person name="Glasner J."/>
            <person name="Perna N.T."/>
        </authorList>
    </citation>
    <scope>NUCLEOTIDE SEQUENCE [LARGE SCALE GENOMIC DNA]</scope>
    <source>
        <strain>PC1</strain>
    </source>
</reference>
<keyword id="KW-0328">Glycosyltransferase</keyword>
<keyword id="KW-0479">Metal-binding</keyword>
<keyword id="KW-0671">Queuosine biosynthesis</keyword>
<keyword id="KW-0808">Transferase</keyword>
<keyword id="KW-0819">tRNA processing</keyword>
<keyword id="KW-0862">Zinc</keyword>
<sequence length="381" mass="43419">MKYELQTTDGRARRGRLIFERGVVETPAFMPVGTYGTVKGMTPEEVKDTGAQILLGNTFHLWLRPGQEIMKLHGDLHDFMQWHGPILTDSGGFQVFSLGDIRKITEQGVHFRNPINGDSIFLSPEKSMEIQHDLGSDIVMIFDECTPYPADWDYAKRSMEMSLRWAKRSRQRFDELENKNALFGIIQGSVYEDLRDVSVKGLVDIGFDGYAVGGLAVGEPKEDMHRILEHVCPQIPEDKPRYLMGVGKPEDLVEGVRRGVDMFDCVMPTRNARNGHLFVTDGVVKIRNAKYKDDVSPLDEHCDCYTCRNYSRAYLHHLDRCNEILGARLNTIHNLRYYQRLMAGLRQAIEEGKLEHFVVDFYQRIGKPIPPLAEKDVAAGN</sequence>
<protein>
    <recommendedName>
        <fullName evidence="1">Queuine tRNA-ribosyltransferase</fullName>
        <ecNumber evidence="1">2.4.2.29</ecNumber>
    </recommendedName>
    <alternativeName>
        <fullName evidence="1">Guanine insertion enzyme</fullName>
    </alternativeName>
    <alternativeName>
        <fullName evidence="1">tRNA-guanine transglycosylase</fullName>
    </alternativeName>
</protein>
<comment type="function">
    <text evidence="1">Catalyzes the base-exchange of a guanine (G) residue with the queuine precursor 7-aminomethyl-7-deazaguanine (PreQ1) at position 34 (anticodon wobble position) in tRNAs with GU(N) anticodons (tRNA-Asp, -Asn, -His and -Tyr). Catalysis occurs through a double-displacement mechanism. The nucleophile active site attacks the C1' of nucleotide 34 to detach the guanine base from the RNA, forming a covalent enzyme-RNA intermediate. The proton acceptor active site deprotonates the incoming PreQ1, allowing a nucleophilic attack on the C1' of the ribose to form the product. After dissociation, two additional enzymatic reactions on the tRNA convert PreQ1 to queuine (Q), resulting in the hypermodified nucleoside queuosine (7-(((4,5-cis-dihydroxy-2-cyclopenten-1-yl)amino)methyl)-7-deazaguanosine).</text>
</comment>
<comment type="catalytic activity">
    <reaction evidence="1">
        <text>7-aminomethyl-7-carbaguanine + guanosine(34) in tRNA = 7-aminomethyl-7-carbaguanosine(34) in tRNA + guanine</text>
        <dbReference type="Rhea" id="RHEA:24104"/>
        <dbReference type="Rhea" id="RHEA-COMP:10341"/>
        <dbReference type="Rhea" id="RHEA-COMP:10342"/>
        <dbReference type="ChEBI" id="CHEBI:16235"/>
        <dbReference type="ChEBI" id="CHEBI:58703"/>
        <dbReference type="ChEBI" id="CHEBI:74269"/>
        <dbReference type="ChEBI" id="CHEBI:82833"/>
        <dbReference type="EC" id="2.4.2.29"/>
    </reaction>
</comment>
<comment type="cofactor">
    <cofactor evidence="1">
        <name>Zn(2+)</name>
        <dbReference type="ChEBI" id="CHEBI:29105"/>
    </cofactor>
    <text evidence="1">Binds 1 zinc ion per subunit.</text>
</comment>
<comment type="pathway">
    <text evidence="1">tRNA modification; tRNA-queuosine biosynthesis.</text>
</comment>
<comment type="subunit">
    <text evidence="1">Homodimer. Within each dimer, one monomer is responsible for RNA recognition and catalysis, while the other monomer binds to the replacement base PreQ1.</text>
</comment>
<comment type="similarity">
    <text evidence="1">Belongs to the queuine tRNA-ribosyltransferase family.</text>
</comment>
<evidence type="ECO:0000255" key="1">
    <source>
        <dbReference type="HAMAP-Rule" id="MF_00168"/>
    </source>
</evidence>
<proteinExistence type="inferred from homology"/>
<name>TGT_PECCP</name>
<gene>
    <name evidence="1" type="primary">tgt</name>
    <name type="ordered locus">PC1_1019</name>
</gene>